<keyword id="KW-0963">Cytoplasm</keyword>
<keyword id="KW-0251">Elongation factor</keyword>
<keyword id="KW-0342">GTP-binding</keyword>
<keyword id="KW-0378">Hydrolase</keyword>
<keyword id="KW-0460">Magnesium</keyword>
<keyword id="KW-0479">Metal-binding</keyword>
<keyword id="KW-0547">Nucleotide-binding</keyword>
<keyword id="KW-0648">Protein biosynthesis</keyword>
<keyword id="KW-1185">Reference proteome</keyword>
<proteinExistence type="inferred from homology"/>
<dbReference type="EC" id="3.6.5.3" evidence="2"/>
<dbReference type="EMBL" id="CP001213">
    <property type="protein sequence ID" value="ACL29436.1"/>
    <property type="molecule type" value="Genomic_DNA"/>
</dbReference>
<dbReference type="RefSeq" id="WP_012619946.1">
    <property type="nucleotide sequence ID" value="NC_011835.1"/>
</dbReference>
<dbReference type="SMR" id="B8DTV7"/>
<dbReference type="STRING" id="442563.BLA_1148"/>
<dbReference type="KEGG" id="bla:BLA_1148"/>
<dbReference type="PATRIC" id="fig|442563.4.peg.1205"/>
<dbReference type="HOGENOM" id="CLU_007265_0_1_11"/>
<dbReference type="Proteomes" id="UP000002456">
    <property type="component" value="Chromosome"/>
</dbReference>
<dbReference type="GO" id="GO:0005829">
    <property type="term" value="C:cytosol"/>
    <property type="evidence" value="ECO:0007669"/>
    <property type="project" value="TreeGrafter"/>
</dbReference>
<dbReference type="GO" id="GO:0005525">
    <property type="term" value="F:GTP binding"/>
    <property type="evidence" value="ECO:0007669"/>
    <property type="project" value="UniProtKB-UniRule"/>
</dbReference>
<dbReference type="GO" id="GO:0003924">
    <property type="term" value="F:GTPase activity"/>
    <property type="evidence" value="ECO:0007669"/>
    <property type="project" value="InterPro"/>
</dbReference>
<dbReference type="GO" id="GO:0003746">
    <property type="term" value="F:translation elongation factor activity"/>
    <property type="evidence" value="ECO:0007669"/>
    <property type="project" value="UniProtKB-UniRule"/>
</dbReference>
<dbReference type="CDD" id="cd01884">
    <property type="entry name" value="EF_Tu"/>
    <property type="match status" value="1"/>
</dbReference>
<dbReference type="CDD" id="cd03697">
    <property type="entry name" value="EFTU_II"/>
    <property type="match status" value="1"/>
</dbReference>
<dbReference type="CDD" id="cd03707">
    <property type="entry name" value="EFTU_III"/>
    <property type="match status" value="1"/>
</dbReference>
<dbReference type="FunFam" id="2.40.30.10:FF:000001">
    <property type="entry name" value="Elongation factor Tu"/>
    <property type="match status" value="1"/>
</dbReference>
<dbReference type="FunFam" id="3.40.50.300:FF:000003">
    <property type="entry name" value="Elongation factor Tu"/>
    <property type="match status" value="1"/>
</dbReference>
<dbReference type="Gene3D" id="3.40.50.300">
    <property type="entry name" value="P-loop containing nucleotide triphosphate hydrolases"/>
    <property type="match status" value="1"/>
</dbReference>
<dbReference type="Gene3D" id="2.40.30.10">
    <property type="entry name" value="Translation factors"/>
    <property type="match status" value="2"/>
</dbReference>
<dbReference type="HAMAP" id="MF_00118_B">
    <property type="entry name" value="EF_Tu_B"/>
    <property type="match status" value="1"/>
</dbReference>
<dbReference type="InterPro" id="IPR041709">
    <property type="entry name" value="EF-Tu_GTP-bd"/>
</dbReference>
<dbReference type="InterPro" id="IPR050055">
    <property type="entry name" value="EF-Tu_GTPase"/>
</dbReference>
<dbReference type="InterPro" id="IPR004161">
    <property type="entry name" value="EFTu-like_2"/>
</dbReference>
<dbReference type="InterPro" id="IPR033720">
    <property type="entry name" value="EFTU_2"/>
</dbReference>
<dbReference type="InterPro" id="IPR031157">
    <property type="entry name" value="G_TR_CS"/>
</dbReference>
<dbReference type="InterPro" id="IPR027417">
    <property type="entry name" value="P-loop_NTPase"/>
</dbReference>
<dbReference type="InterPro" id="IPR005225">
    <property type="entry name" value="Small_GTP-bd"/>
</dbReference>
<dbReference type="InterPro" id="IPR000795">
    <property type="entry name" value="T_Tr_GTP-bd_dom"/>
</dbReference>
<dbReference type="InterPro" id="IPR009000">
    <property type="entry name" value="Transl_B-barrel_sf"/>
</dbReference>
<dbReference type="InterPro" id="IPR009001">
    <property type="entry name" value="Transl_elong_EF1A/Init_IF2_C"/>
</dbReference>
<dbReference type="InterPro" id="IPR004541">
    <property type="entry name" value="Transl_elong_EFTu/EF1A_bac/org"/>
</dbReference>
<dbReference type="InterPro" id="IPR004160">
    <property type="entry name" value="Transl_elong_EFTu/EF1A_C"/>
</dbReference>
<dbReference type="NCBIfam" id="TIGR00485">
    <property type="entry name" value="EF-Tu"/>
    <property type="match status" value="1"/>
</dbReference>
<dbReference type="NCBIfam" id="NF000766">
    <property type="entry name" value="PRK00049.1"/>
    <property type="match status" value="1"/>
</dbReference>
<dbReference type="NCBIfam" id="NF009372">
    <property type="entry name" value="PRK12735.1"/>
    <property type="match status" value="1"/>
</dbReference>
<dbReference type="NCBIfam" id="NF009373">
    <property type="entry name" value="PRK12736.1"/>
    <property type="match status" value="1"/>
</dbReference>
<dbReference type="NCBIfam" id="TIGR00231">
    <property type="entry name" value="small_GTP"/>
    <property type="match status" value="1"/>
</dbReference>
<dbReference type="PANTHER" id="PTHR43721:SF22">
    <property type="entry name" value="ELONGATION FACTOR TU, MITOCHONDRIAL"/>
    <property type="match status" value="1"/>
</dbReference>
<dbReference type="PANTHER" id="PTHR43721">
    <property type="entry name" value="ELONGATION FACTOR TU-RELATED"/>
    <property type="match status" value="1"/>
</dbReference>
<dbReference type="Pfam" id="PF00009">
    <property type="entry name" value="GTP_EFTU"/>
    <property type="match status" value="1"/>
</dbReference>
<dbReference type="Pfam" id="PF03144">
    <property type="entry name" value="GTP_EFTU_D2"/>
    <property type="match status" value="1"/>
</dbReference>
<dbReference type="Pfam" id="PF03143">
    <property type="entry name" value="GTP_EFTU_D3"/>
    <property type="match status" value="1"/>
</dbReference>
<dbReference type="PRINTS" id="PR00315">
    <property type="entry name" value="ELONGATNFCT"/>
</dbReference>
<dbReference type="SUPFAM" id="SSF50465">
    <property type="entry name" value="EF-Tu/eEF-1alpha/eIF2-gamma C-terminal domain"/>
    <property type="match status" value="1"/>
</dbReference>
<dbReference type="SUPFAM" id="SSF52540">
    <property type="entry name" value="P-loop containing nucleoside triphosphate hydrolases"/>
    <property type="match status" value="1"/>
</dbReference>
<dbReference type="SUPFAM" id="SSF50447">
    <property type="entry name" value="Translation proteins"/>
    <property type="match status" value="1"/>
</dbReference>
<dbReference type="PROSITE" id="PS00301">
    <property type="entry name" value="G_TR_1"/>
    <property type="match status" value="1"/>
</dbReference>
<dbReference type="PROSITE" id="PS51722">
    <property type="entry name" value="G_TR_2"/>
    <property type="match status" value="1"/>
</dbReference>
<comment type="function">
    <text evidence="2">GTP hydrolase that promotes the GTP-dependent binding of aminoacyl-tRNA to the A-site of ribosomes during protein biosynthesis.</text>
</comment>
<comment type="catalytic activity">
    <reaction evidence="2">
        <text>GTP + H2O = GDP + phosphate + H(+)</text>
        <dbReference type="Rhea" id="RHEA:19669"/>
        <dbReference type="ChEBI" id="CHEBI:15377"/>
        <dbReference type="ChEBI" id="CHEBI:15378"/>
        <dbReference type="ChEBI" id="CHEBI:37565"/>
        <dbReference type="ChEBI" id="CHEBI:43474"/>
        <dbReference type="ChEBI" id="CHEBI:58189"/>
        <dbReference type="EC" id="3.6.5.3"/>
    </reaction>
    <physiologicalReaction direction="left-to-right" evidence="2">
        <dbReference type="Rhea" id="RHEA:19670"/>
    </physiologicalReaction>
</comment>
<comment type="subunit">
    <text evidence="2">Monomer.</text>
</comment>
<comment type="subcellular location">
    <subcellularLocation>
        <location evidence="2">Cytoplasm</location>
    </subcellularLocation>
</comment>
<comment type="similarity">
    <text evidence="2">Belongs to the TRAFAC class translation factor GTPase superfamily. Classic translation factor GTPase family. EF-Tu/EF-1A subfamily.</text>
</comment>
<reference key="1">
    <citation type="journal article" date="2009" name="J. Bacteriol.">
        <title>Genome sequence of the probiotic bacterium Bifidobacterium animalis subsp. lactis AD011.</title>
        <authorList>
            <person name="Kim J.F."/>
            <person name="Jeong H."/>
            <person name="Yu D.S."/>
            <person name="Choi S.-H."/>
            <person name="Hur C.-G."/>
            <person name="Park M.-S."/>
            <person name="Yoon S.H."/>
            <person name="Kim D.-W."/>
            <person name="Ji G.E."/>
            <person name="Park H.-S."/>
            <person name="Oh T.K."/>
        </authorList>
    </citation>
    <scope>NUCLEOTIDE SEQUENCE [LARGE SCALE GENOMIC DNA]</scope>
    <source>
        <strain>AD011</strain>
    </source>
</reference>
<feature type="chain" id="PRO_1000201387" description="Elongation factor Tu">
    <location>
        <begin position="1"/>
        <end position="399"/>
    </location>
</feature>
<feature type="domain" description="tr-type G">
    <location>
        <begin position="10"/>
        <end position="209"/>
    </location>
</feature>
<feature type="region of interest" description="G1" evidence="1">
    <location>
        <begin position="19"/>
        <end position="26"/>
    </location>
</feature>
<feature type="region of interest" description="G2" evidence="1">
    <location>
        <begin position="62"/>
        <end position="66"/>
    </location>
</feature>
<feature type="region of interest" description="G3" evidence="1">
    <location>
        <begin position="83"/>
        <end position="86"/>
    </location>
</feature>
<feature type="region of interest" description="G4" evidence="1">
    <location>
        <begin position="138"/>
        <end position="141"/>
    </location>
</feature>
<feature type="region of interest" description="G5" evidence="1">
    <location>
        <begin position="175"/>
        <end position="177"/>
    </location>
</feature>
<feature type="binding site" evidence="2">
    <location>
        <begin position="19"/>
        <end position="26"/>
    </location>
    <ligand>
        <name>GTP</name>
        <dbReference type="ChEBI" id="CHEBI:37565"/>
    </ligand>
</feature>
<feature type="binding site" evidence="2">
    <location>
        <position position="26"/>
    </location>
    <ligand>
        <name>Mg(2+)</name>
        <dbReference type="ChEBI" id="CHEBI:18420"/>
    </ligand>
</feature>
<feature type="binding site" evidence="2">
    <location>
        <begin position="83"/>
        <end position="87"/>
    </location>
    <ligand>
        <name>GTP</name>
        <dbReference type="ChEBI" id="CHEBI:37565"/>
    </ligand>
</feature>
<feature type="binding site" evidence="2">
    <location>
        <begin position="138"/>
        <end position="141"/>
    </location>
    <ligand>
        <name>GTP</name>
        <dbReference type="ChEBI" id="CHEBI:37565"/>
    </ligand>
</feature>
<accession>B8DTV7</accession>
<name>EFTU_BIFA0</name>
<gene>
    <name evidence="2" type="primary">tuf</name>
    <name type="ordered locus">BLA_1148</name>
</gene>
<organism>
    <name type="scientific">Bifidobacterium animalis subsp. lactis (strain AD011)</name>
    <dbReference type="NCBI Taxonomy" id="442563"/>
    <lineage>
        <taxon>Bacteria</taxon>
        <taxon>Bacillati</taxon>
        <taxon>Actinomycetota</taxon>
        <taxon>Actinomycetes</taxon>
        <taxon>Bifidobacteriales</taxon>
        <taxon>Bifidobacteriaceae</taxon>
        <taxon>Bifidobacterium</taxon>
    </lineage>
</organism>
<sequence length="399" mass="44070">MAKEKYERTKPHVNIGTIGHVDHGKTTLTAAISKVLHDEYPDLNPEYDFNQIDAAPEEQQRGITINIAHIEYQTAKRHYAHVDCPGHADFVKNMITGAAQMDGAILVVAATDGPMAQTREHVLLAPQVGVPKILVALNKCDMVDDEELIELVEEEVRDLLDENGFDRDCPVVHTSAYGALHDDAPDHDKWVATIKELMDDVDEYIPTPVHDLDKPFLMPIEDVFTISGRGTVVTGRVERGKLPINTNVEIVGIRPTQTTTFTSIETFHKQMDECEAGDNTGLLLRGINRTDVERGQVVAAPGSVTPHTKFEGEVYVLTKDEGGRHSPFFSNYRPQFYFRTTDVTGVITLPEGVEMVQPGDHATFTVELIQPIAMEEGLTFAVREGGHTVGSGRVTKILA</sequence>
<protein>
    <recommendedName>
        <fullName evidence="2">Elongation factor Tu</fullName>
        <shortName evidence="2">EF-Tu</shortName>
        <ecNumber evidence="2">3.6.5.3</ecNumber>
    </recommendedName>
</protein>
<evidence type="ECO:0000250" key="1"/>
<evidence type="ECO:0000255" key="2">
    <source>
        <dbReference type="HAMAP-Rule" id="MF_00118"/>
    </source>
</evidence>